<keyword id="KW-0249">Electron transport</keyword>
<keyword id="KW-0349">Heme</keyword>
<keyword id="KW-0408">Iron</keyword>
<keyword id="KW-0472">Membrane</keyword>
<keyword id="KW-0479">Metal-binding</keyword>
<keyword id="KW-0496">Mitochondrion</keyword>
<keyword id="KW-0999">Mitochondrion inner membrane</keyword>
<keyword id="KW-0679">Respiratory chain</keyword>
<keyword id="KW-0812">Transmembrane</keyword>
<keyword id="KW-1133">Transmembrane helix</keyword>
<keyword id="KW-0813">Transport</keyword>
<keyword id="KW-0830">Ubiquinone</keyword>
<sequence length="379" mass="42745">MKIMRKNHPMLKIINHSFIDLPTPSNISSWWNFGSLLGICLMIQILTGLFLAMHYTSDTATAFSSVVHICRDVNYGWLIRYLHANGASMFFICLFIHVGRGIYYGSYVLSETWNIGIILLLTTMATAFVGYVLPWGQMSLWGATVITNLLSAIPYIGNTLVEWIWGGFSVDKATLTRFFAFHFILPFIITAFVLVHLLFLHETGSNNPSGLNSDSDKIPFHPYYTIKDLLGILLLLMTLIILALFFPDALGDPDNYTPANPLNTPAHIKPEWYFLFAYAILRSIPNKLGGVLALILSILILATFPLLNTSKQHGLIFRPISQTIYWTFVANLLVLTWIGGQPVEYPFTMIGQIASIFYFTIIIILMPVSNTIENNIMKF</sequence>
<accession>Q6WRG4</accession>
<gene>
    <name type="primary">MT-CYB</name>
    <name type="synonym">COB</name>
    <name type="synonym">CYTB</name>
    <name type="synonym">MTCYB</name>
</gene>
<name>CYB_THACE</name>
<feature type="chain" id="PRO_0000257953" description="Cytochrome b">
    <location>
        <begin position="1"/>
        <end position="379"/>
    </location>
</feature>
<feature type="transmembrane region" description="Helical" evidence="2">
    <location>
        <begin position="33"/>
        <end position="53"/>
    </location>
</feature>
<feature type="transmembrane region" description="Helical" evidence="2">
    <location>
        <begin position="77"/>
        <end position="98"/>
    </location>
</feature>
<feature type="transmembrane region" description="Helical" evidence="2">
    <location>
        <begin position="113"/>
        <end position="133"/>
    </location>
</feature>
<feature type="transmembrane region" description="Helical" evidence="2">
    <location>
        <begin position="178"/>
        <end position="198"/>
    </location>
</feature>
<feature type="transmembrane region" description="Helical" evidence="2">
    <location>
        <begin position="226"/>
        <end position="246"/>
    </location>
</feature>
<feature type="transmembrane region" description="Helical" evidence="2">
    <location>
        <begin position="288"/>
        <end position="308"/>
    </location>
</feature>
<feature type="transmembrane region" description="Helical" evidence="2">
    <location>
        <begin position="320"/>
        <end position="340"/>
    </location>
</feature>
<feature type="transmembrane region" description="Helical" evidence="2">
    <location>
        <begin position="347"/>
        <end position="367"/>
    </location>
</feature>
<feature type="binding site" description="axial binding residue" evidence="2">
    <location>
        <position position="83"/>
    </location>
    <ligand>
        <name>heme b</name>
        <dbReference type="ChEBI" id="CHEBI:60344"/>
        <label>b562</label>
    </ligand>
    <ligandPart>
        <name>Fe</name>
        <dbReference type="ChEBI" id="CHEBI:18248"/>
    </ligandPart>
</feature>
<feature type="binding site" description="axial binding residue" evidence="2">
    <location>
        <position position="97"/>
    </location>
    <ligand>
        <name>heme b</name>
        <dbReference type="ChEBI" id="CHEBI:60344"/>
        <label>b566</label>
    </ligand>
    <ligandPart>
        <name>Fe</name>
        <dbReference type="ChEBI" id="CHEBI:18248"/>
    </ligandPart>
</feature>
<feature type="binding site" description="axial binding residue" evidence="2">
    <location>
        <position position="182"/>
    </location>
    <ligand>
        <name>heme b</name>
        <dbReference type="ChEBI" id="CHEBI:60344"/>
        <label>b562</label>
    </ligand>
    <ligandPart>
        <name>Fe</name>
        <dbReference type="ChEBI" id="CHEBI:18248"/>
    </ligandPart>
</feature>
<feature type="binding site" description="axial binding residue" evidence="2">
    <location>
        <position position="196"/>
    </location>
    <ligand>
        <name>heme b</name>
        <dbReference type="ChEBI" id="CHEBI:60344"/>
        <label>b566</label>
    </ligand>
    <ligandPart>
        <name>Fe</name>
        <dbReference type="ChEBI" id="CHEBI:18248"/>
    </ligandPart>
</feature>
<feature type="binding site" evidence="2">
    <location>
        <position position="201"/>
    </location>
    <ligand>
        <name>a ubiquinone</name>
        <dbReference type="ChEBI" id="CHEBI:16389"/>
    </ligand>
</feature>
<organism>
    <name type="scientific">Thalpomys cerradensis</name>
    <name type="common">Cerrado mouse</name>
    <dbReference type="NCBI Taxonomy" id="240587"/>
    <lineage>
        <taxon>Eukaryota</taxon>
        <taxon>Metazoa</taxon>
        <taxon>Chordata</taxon>
        <taxon>Craniata</taxon>
        <taxon>Vertebrata</taxon>
        <taxon>Euteleostomi</taxon>
        <taxon>Mammalia</taxon>
        <taxon>Eutheria</taxon>
        <taxon>Euarchontoglires</taxon>
        <taxon>Glires</taxon>
        <taxon>Rodentia</taxon>
        <taxon>Myomorpha</taxon>
        <taxon>Muroidea</taxon>
        <taxon>Cricetidae</taxon>
        <taxon>Sigmodontinae</taxon>
        <taxon>Thalpomys</taxon>
    </lineage>
</organism>
<dbReference type="EMBL" id="AY273915">
    <property type="protein sequence ID" value="AAQ20032.1"/>
    <property type="molecule type" value="Genomic_DNA"/>
</dbReference>
<dbReference type="EMBL" id="AY273916">
    <property type="protein sequence ID" value="AAQ20033.1"/>
    <property type="molecule type" value="Genomic_DNA"/>
</dbReference>
<dbReference type="SMR" id="Q6WRG4"/>
<dbReference type="GO" id="GO:0005743">
    <property type="term" value="C:mitochondrial inner membrane"/>
    <property type="evidence" value="ECO:0007669"/>
    <property type="project" value="UniProtKB-SubCell"/>
</dbReference>
<dbReference type="GO" id="GO:0045275">
    <property type="term" value="C:respiratory chain complex III"/>
    <property type="evidence" value="ECO:0007669"/>
    <property type="project" value="InterPro"/>
</dbReference>
<dbReference type="GO" id="GO:0046872">
    <property type="term" value="F:metal ion binding"/>
    <property type="evidence" value="ECO:0007669"/>
    <property type="project" value="UniProtKB-KW"/>
</dbReference>
<dbReference type="GO" id="GO:0008121">
    <property type="term" value="F:ubiquinol-cytochrome-c reductase activity"/>
    <property type="evidence" value="ECO:0007669"/>
    <property type="project" value="InterPro"/>
</dbReference>
<dbReference type="GO" id="GO:0006122">
    <property type="term" value="P:mitochondrial electron transport, ubiquinol to cytochrome c"/>
    <property type="evidence" value="ECO:0007669"/>
    <property type="project" value="TreeGrafter"/>
</dbReference>
<dbReference type="CDD" id="cd00290">
    <property type="entry name" value="cytochrome_b_C"/>
    <property type="match status" value="1"/>
</dbReference>
<dbReference type="CDD" id="cd00284">
    <property type="entry name" value="Cytochrome_b_N"/>
    <property type="match status" value="1"/>
</dbReference>
<dbReference type="FunFam" id="1.20.810.10:FF:000002">
    <property type="entry name" value="Cytochrome b"/>
    <property type="match status" value="1"/>
</dbReference>
<dbReference type="Gene3D" id="1.20.810.10">
    <property type="entry name" value="Cytochrome Bc1 Complex, Chain C"/>
    <property type="match status" value="1"/>
</dbReference>
<dbReference type="InterPro" id="IPR005798">
    <property type="entry name" value="Cyt_b/b6_C"/>
</dbReference>
<dbReference type="InterPro" id="IPR036150">
    <property type="entry name" value="Cyt_b/b6_C_sf"/>
</dbReference>
<dbReference type="InterPro" id="IPR005797">
    <property type="entry name" value="Cyt_b/b6_N"/>
</dbReference>
<dbReference type="InterPro" id="IPR027387">
    <property type="entry name" value="Cytb/b6-like_sf"/>
</dbReference>
<dbReference type="InterPro" id="IPR030689">
    <property type="entry name" value="Cytochrome_b"/>
</dbReference>
<dbReference type="InterPro" id="IPR048260">
    <property type="entry name" value="Cytochrome_b_C_euk/bac"/>
</dbReference>
<dbReference type="InterPro" id="IPR048259">
    <property type="entry name" value="Cytochrome_b_N_euk/bac"/>
</dbReference>
<dbReference type="InterPro" id="IPR016174">
    <property type="entry name" value="Di-haem_cyt_TM"/>
</dbReference>
<dbReference type="PANTHER" id="PTHR19271">
    <property type="entry name" value="CYTOCHROME B"/>
    <property type="match status" value="1"/>
</dbReference>
<dbReference type="PANTHER" id="PTHR19271:SF16">
    <property type="entry name" value="CYTOCHROME B"/>
    <property type="match status" value="1"/>
</dbReference>
<dbReference type="Pfam" id="PF00032">
    <property type="entry name" value="Cytochrom_B_C"/>
    <property type="match status" value="1"/>
</dbReference>
<dbReference type="Pfam" id="PF00033">
    <property type="entry name" value="Cytochrome_B"/>
    <property type="match status" value="1"/>
</dbReference>
<dbReference type="PIRSF" id="PIRSF038885">
    <property type="entry name" value="COB"/>
    <property type="match status" value="1"/>
</dbReference>
<dbReference type="SUPFAM" id="SSF81648">
    <property type="entry name" value="a domain/subunit of cytochrome bc1 complex (Ubiquinol-cytochrome c reductase)"/>
    <property type="match status" value="1"/>
</dbReference>
<dbReference type="SUPFAM" id="SSF81342">
    <property type="entry name" value="Transmembrane di-heme cytochromes"/>
    <property type="match status" value="1"/>
</dbReference>
<dbReference type="PROSITE" id="PS51003">
    <property type="entry name" value="CYTB_CTER"/>
    <property type="match status" value="1"/>
</dbReference>
<dbReference type="PROSITE" id="PS51002">
    <property type="entry name" value="CYTB_NTER"/>
    <property type="match status" value="1"/>
</dbReference>
<proteinExistence type="inferred from homology"/>
<evidence type="ECO:0000250" key="1"/>
<evidence type="ECO:0000250" key="2">
    <source>
        <dbReference type="UniProtKB" id="P00157"/>
    </source>
</evidence>
<evidence type="ECO:0000255" key="3">
    <source>
        <dbReference type="PROSITE-ProRule" id="PRU00967"/>
    </source>
</evidence>
<evidence type="ECO:0000255" key="4">
    <source>
        <dbReference type="PROSITE-ProRule" id="PRU00968"/>
    </source>
</evidence>
<protein>
    <recommendedName>
        <fullName>Cytochrome b</fullName>
    </recommendedName>
    <alternativeName>
        <fullName>Complex III subunit 3</fullName>
    </alternativeName>
    <alternativeName>
        <fullName>Complex III subunit III</fullName>
    </alternativeName>
    <alternativeName>
        <fullName>Cytochrome b-c1 complex subunit 3</fullName>
    </alternativeName>
    <alternativeName>
        <fullName>Ubiquinol-cytochrome-c reductase complex cytochrome b subunit</fullName>
    </alternativeName>
</protein>
<reference key="1">
    <citation type="journal article" date="2003" name="Cladistics">
        <title>Phylogenetics of Sigmodontinae (Rodentia, Muroidea, Cricetidae), with special reference to the akodont group, and with additional comments on historical biogeography.</title>
        <authorList>
            <person name="D'Elia G."/>
        </authorList>
    </citation>
    <scope>NUCLEOTIDE SEQUENCE [GENOMIC DNA]</scope>
</reference>
<geneLocation type="mitochondrion"/>
<comment type="function">
    <text evidence="2">Component of the ubiquinol-cytochrome c reductase complex (complex III or cytochrome b-c1 complex) that is part of the mitochondrial respiratory chain. The b-c1 complex mediates electron transfer from ubiquinol to cytochrome c. Contributes to the generation of a proton gradient across the mitochondrial membrane that is then used for ATP synthesis.</text>
</comment>
<comment type="cofactor">
    <cofactor evidence="2">
        <name>heme b</name>
        <dbReference type="ChEBI" id="CHEBI:60344"/>
    </cofactor>
    <text evidence="2">Binds 2 heme b groups non-covalently.</text>
</comment>
<comment type="subunit">
    <text evidence="2">The cytochrome bc1 complex contains 11 subunits: 3 respiratory subunits (MT-CYB, CYC1 and UQCRFS1), 2 core proteins (UQCRC1 and UQCRC2) and 6 low-molecular weight proteins (UQCRH/QCR6, UQCRB/QCR7, UQCRQ/QCR8, UQCR10/QCR9, UQCR11/QCR10 and a cleavage product of UQCRFS1). This cytochrome bc1 complex then forms a dimer.</text>
</comment>
<comment type="subcellular location">
    <subcellularLocation>
        <location evidence="2">Mitochondrion inner membrane</location>
        <topology evidence="2">Multi-pass membrane protein</topology>
    </subcellularLocation>
</comment>
<comment type="miscellaneous">
    <text evidence="1">Heme 1 (or BL or b562) is low-potential and absorbs at about 562 nm, and heme 2 (or BH or b566) is high-potential and absorbs at about 566 nm.</text>
</comment>
<comment type="similarity">
    <text evidence="3 4">Belongs to the cytochrome b family.</text>
</comment>
<comment type="caution">
    <text evidence="2">The full-length protein contains only eight transmembrane helices, not nine as predicted by bioinformatics tools.</text>
</comment>